<protein>
    <recommendedName>
        <fullName>RNA-directed RNA polymerase L</fullName>
        <shortName>Protein L</shortName>
    </recommendedName>
    <alternativeName>
        <fullName>Large structural protein</fullName>
    </alternativeName>
    <alternativeName>
        <fullName>Replicase</fullName>
    </alternativeName>
    <alternativeName>
        <fullName>Transcriptase</fullName>
    </alternativeName>
    <domain>
        <recommendedName>
            <fullName>RNA-directed RNA polymerase</fullName>
            <ecNumber evidence="2">2.7.7.48</ecNumber>
        </recommendedName>
    </domain>
    <domain>
        <recommendedName>
            <fullName evidence="1">GTP phosphohydrolase</fullName>
            <ecNumber evidence="1">3.6.1.-</ecNumber>
        </recommendedName>
    </domain>
    <domain>
        <recommendedName>
            <fullName evidence="9">GDP polyribonucleotidyltransferase</fullName>
            <ecNumber evidence="1">2.7.7.88</ecNumber>
        </recommendedName>
        <alternativeName>
            <fullName evidence="9">PRNTase</fullName>
        </alternativeName>
    </domain>
    <domain>
        <recommendedName>
            <fullName evidence="9">mRNA cap methyltransferase</fullName>
            <ecNumber evidence="1">2.1.1.375</ecNumber>
        </recommendedName>
        <alternativeName>
            <fullName evidence="1">mRNA (guanine-N(7)-)-methyltransferase</fullName>
            <shortName evidence="1">G-N7-MTase</shortName>
        </alternativeName>
        <alternativeName>
            <fullName evidence="1">mRNA (nucleoside-2'-O-)-methyltransferase</fullName>
            <shortName evidence="1">N1-2'-O-MTase</shortName>
        </alternativeName>
    </domain>
</protein>
<keyword id="KW-0067">ATP-binding</keyword>
<keyword id="KW-1035">Host cytoplasm</keyword>
<keyword id="KW-0378">Hydrolase</keyword>
<keyword id="KW-0489">Methyltransferase</keyword>
<keyword id="KW-0506">mRNA capping</keyword>
<keyword id="KW-0507">mRNA processing</keyword>
<keyword id="KW-0511">Multifunctional enzyme</keyword>
<keyword id="KW-0547">Nucleotide-binding</keyword>
<keyword id="KW-0548">Nucleotidyltransferase</keyword>
<keyword id="KW-1185">Reference proteome</keyword>
<keyword id="KW-0696">RNA-directed RNA polymerase</keyword>
<keyword id="KW-0949">S-adenosyl-L-methionine</keyword>
<keyword id="KW-0808">Transferase</keyword>
<keyword id="KW-0693">Viral RNA replication</keyword>
<keyword id="KW-0946">Virion</keyword>
<organismHost>
    <name type="scientific">Epomops franqueti</name>
    <name type="common">Franquet's epauletted fruit bat</name>
    <name type="synonym">Epomophorus franqueti</name>
    <dbReference type="NCBI Taxonomy" id="77231"/>
</organismHost>
<organismHost>
    <name type="scientific">Homo sapiens</name>
    <name type="common">Human</name>
    <dbReference type="NCBI Taxonomy" id="9606"/>
</organismHost>
<organismHost>
    <name type="scientific">Myonycteris torquata</name>
    <name type="common">Little collared fruit bat</name>
    <dbReference type="NCBI Taxonomy" id="77243"/>
</organismHost>
<feature type="chain" id="PRO_0000222167" description="RNA-directed RNA polymerase L">
    <location>
        <begin position="1"/>
        <end position="2212"/>
    </location>
</feature>
<feature type="domain" description="RdRp catalytic" evidence="3">
    <location>
        <begin position="625"/>
        <end position="809"/>
    </location>
</feature>
<feature type="domain" description="Mononegavirus-type SAM-dependent 2'-O-MTase" evidence="4">
    <location>
        <begin position="1805"/>
        <end position="2003"/>
    </location>
</feature>
<feature type="region of interest" description="Homooligomerization" evidence="6">
    <location>
        <begin position="1"/>
        <end position="450"/>
    </location>
</feature>
<feature type="region of interest" description="Interaction with VP35" evidence="6">
    <location>
        <begin position="1"/>
        <end position="380"/>
    </location>
</feature>
<feature type="region of interest" description="Disordered" evidence="5">
    <location>
        <begin position="1653"/>
        <end position="1689"/>
    </location>
</feature>
<feature type="short sequence motif" description="Essential for both viral transcription and replication" evidence="7">
    <location>
        <begin position="741"/>
        <end position="744"/>
    </location>
</feature>
<feature type="compositionally biased region" description="Low complexity" evidence="5">
    <location>
        <begin position="1658"/>
        <end position="1669"/>
    </location>
</feature>
<feature type="compositionally biased region" description="Basic and acidic residues" evidence="5">
    <location>
        <begin position="1670"/>
        <end position="1688"/>
    </location>
</feature>
<feature type="sequence variant">
    <original>T</original>
    <variation>A</variation>
    <location>
        <position position="820"/>
    </location>
</feature>
<feature type="sequence variant">
    <original>F</original>
    <variation>L</variation>
    <location>
        <position position="934"/>
    </location>
</feature>
<feature type="sequence variant">
    <original>I</original>
    <variation>V</variation>
    <location>
        <position position="1532"/>
    </location>
</feature>
<feature type="mutagenesis site" description="Complete loss of replication and transcription." evidence="7">
    <original>DNQ</original>
    <variation>AAA</variation>
    <location>
        <begin position="742"/>
        <end position="744"/>
    </location>
</feature>
<feature type="mutagenesis site" description="Complete loss OF RNA synthesis." evidence="8">
    <original>D</original>
    <variation>A</variation>
    <location>
        <position position="742"/>
    </location>
</feature>
<evidence type="ECO:0000250" key="1">
    <source>
        <dbReference type="UniProtKB" id="P03523"/>
    </source>
</evidence>
<evidence type="ECO:0000250" key="2">
    <source>
        <dbReference type="UniProtKB" id="P28887"/>
    </source>
</evidence>
<evidence type="ECO:0000255" key="3">
    <source>
        <dbReference type="PROSITE-ProRule" id="PRU00539"/>
    </source>
</evidence>
<evidence type="ECO:0000255" key="4">
    <source>
        <dbReference type="PROSITE-ProRule" id="PRU00923"/>
    </source>
</evidence>
<evidence type="ECO:0000256" key="5">
    <source>
        <dbReference type="SAM" id="MobiDB-lite"/>
    </source>
</evidence>
<evidence type="ECO:0000269" key="6">
    <source>
    </source>
</evidence>
<evidence type="ECO:0000269" key="7">
    <source>
    </source>
</evidence>
<evidence type="ECO:0000269" key="8">
    <source>
    </source>
</evidence>
<evidence type="ECO:0000305" key="9"/>
<gene>
    <name type="primary">L</name>
</gene>
<sequence length="2212" mass="252724">MATQHTQYPDARLSSPIVLDQCDLVTRACGLYSSYSLNPQLRNCKLPKHIYRLKYDVTVTKFLSDVPVATLPIDFIVPVLLKALSGNGFCPVEPRCQQFLDEIIKYTMQDALFLKYYLKNVGAQEDCVDEHFQEKILSSIQGNEFLHQMFFWYDLAILTRRGRLNRGNSRSTWFVHDDLIDILGYGDYVFWKIPISMLPLNTQGIPHAAMDWYQASVFKEAVQGHTHIVSVSTADVLIMCKDLITCRFNTTLISKIAEIEDPVCSDYPNFKIVSMLYQSGDYLLSILGSDGYKIIKFLEPLCLAKIQLCSKYTERKGRFLTQMHLAVNHTLEEITEMRALKPSQAQKIREFHRTLIRLEMTPQQLCELFSIQKHWGHPVLHSETAIQKVKKHATVLKALRPIVIFETYCVFKYSIAKHYFDSQGSWYSVTSDRNLTPGLNSYIKRNQFPPLPMIKELLWEFYHLDHPPLFSTKIISDLSIFIKDRATAVERTCWDAVFEPNVLGYNPPHKFSTKRVPEQFLEQENFSIENVLSYAQKLEYLLPQYRNFSFSLKEKELNVGRTFGKLPYPTRNVQTLCEALLADGLAKAFPSNMMVVTEREQKESLLHQASWHHTSDDFGEHATVRGSSFVTDLEKYNLAFRYEFTAPFIEYCNRCYGVKNVFNWMHYTIPQCYMHVSDYYNPPHNLTLENRDNPPEGPSSYRGHMGGIEGLQQKLWTSISCAQISLVEIKTGFKLRSAVMGDNQCITVLSVFPLETDADEQEQSAEDNAARVAASLAKVTSACGIFLKPDETFVHSGFIYFGKKQYLNGVQLPQSLKTATRMAPLSDAIFDDLQGTLASIGTAFERSISETRHIFPCRITAAFHTFFSVRILQYHHLGFNKGFDLGQLTLGKPLDFGTISLALAVPQVLGGLSFLNPEKCFYRNLGDPVTSGLFQLKTYLRMIEMDDLFLPLIAKNPGNCTAIDFVLNPSGLNVPGSQDLTSFLRQIVRRTITLSAKNKLINTLFHASADFEDEMVCKWLLSSTPVMSRFAADIFSRTPSGKRLQILGYLEGTRTLLASKIINNNTETPVLDRLRKITLQRWSLWFSYLDHCDNILAEALTQITCTVDLAQILREYSWAHILEGRPLIGATLPCMIEQFKVFWLKPYEQCPQCSNAKQPGGKPFVSVAVKKHIVSAWPNASRISWTIGDGIPYIGSRTEDKIGQPAIKPKCPSAALREAIELASRLTWVTQGSSNSDLLIKPFLEARVNLSVQEILQMTPSHYSGNIVHRYNDQYSPHSFMANRMSNSATRLIVSTNTLGEFSGGGQSARDSNIIFQNVINYAVALFDIKFRNTEATDIQYNRAHLHLTKCCTREVPAQYLTYTSTLDLDLTRYRENELIYDSNPLKGGLNCNISFDNPFFQGKRLNIIEDDLIRLPHLSGWELAKTIMQSIISDSNNSSTDPISSGETRSFTTHFLTYPKIGLLYSFGAFVSYYLGNTILRTKKLTLDNFLYYLTTQIHNLPHRSLRILKPTFKHASVMSRLMSIDPHFSIYIGGAAGDRGLSDAARLFLRTSISSFLTFVKEWIINRGTIVPLWIVYPLEGQNPTPVNNFLYQIVELLVHDSSRQQAFKTTISDHVHPHDNLVYTCKSTASNFFHASLAYWRSRHRNSNRKYLARDSSTGSSTNNSDGHIERSQEQTTRDPHDGTERNLVLQMSHEIKRTTIPQENTHQGPSFQSFLSDSACGTANPKLNFDRSRHNVKFQDHNSASKREGHQIISHRLVLPFFTLSQGTRQLTSSNESQTQDEISKYLRQLRSVIDTTVYCRFTGIVSSMHYKLDEVLWEIESFKSAVTLAEGEGAGALLLIQKYQVKTLFFNTLATESSIESEIVSGMTTPRMLLPVMSKFHNDQIEIILNNSASQITDITNPTWFKDQRARLPKQVEVITMDAETTENINRSKLYEAVYKLILHHIDPSVLKAVVLKVFLSDTEGMLWLNDNLAPFFATGYLIKPITSSARSSEWYLCLTNFLSTTRKMPHQNHLSCKQVILTALQLQIQRSPYWLSHLTQYADCELHLSYIRLGFPSLEKVLYHRYNLVDSKRGPLVSITQHLAHLRAEIRELTNDYNQQRQSRTQTYHFIRTAKGRITKLVNDYLKFFLIVQALKHNGTWQAEFKKLPELISVCNRFYHIRDCNCEERFLVQTLYLHRMQDSEVKLIERLTGLLSLFPDGLYRFD</sequence>
<accession>Q05318</accession>
<accession>O39794</accession>
<accession>Q773N0</accession>
<accession>Q8JS59</accession>
<accession>Q9DQD1</accession>
<organism>
    <name type="scientific">Zaire ebolavirus (strain Mayinga-76)</name>
    <name type="common">ZEBOV</name>
    <name type="synonym">Zaire Ebola virus</name>
    <dbReference type="NCBI Taxonomy" id="128952"/>
    <lineage>
        <taxon>Viruses</taxon>
        <taxon>Riboviria</taxon>
        <taxon>Orthornavirae</taxon>
        <taxon>Negarnaviricota</taxon>
        <taxon>Haploviricotina</taxon>
        <taxon>Monjiviricetes</taxon>
        <taxon>Mononegavirales</taxon>
        <taxon>Filoviridae</taxon>
        <taxon>Orthoebolavirus</taxon>
        <taxon>Orthoebolavirus zairense</taxon>
        <taxon>Zaire ebolavirus</taxon>
    </lineage>
</organism>
<proteinExistence type="evidence at protein level"/>
<dbReference type="EC" id="2.7.7.48" evidence="2"/>
<dbReference type="EC" id="3.6.1.-" evidence="1"/>
<dbReference type="EC" id="2.7.7.88" evidence="1"/>
<dbReference type="EC" id="2.1.1.375" evidence="1"/>
<dbReference type="EMBL" id="X67110">
    <property type="protein sequence ID" value="CAA47483.1"/>
    <property type="molecule type" value="Genomic_RNA"/>
</dbReference>
<dbReference type="EMBL" id="AF272001">
    <property type="protein sequence ID" value="AAG40171.1"/>
    <property type="molecule type" value="Genomic_RNA"/>
</dbReference>
<dbReference type="EMBL" id="AF086833">
    <property type="protein sequence ID" value="AAD14589.1"/>
    <property type="molecule type" value="Genomic_RNA"/>
</dbReference>
<dbReference type="EMBL" id="L11365">
    <property type="protein sequence ID" value="AAB81007.1"/>
    <property type="molecule type" value="Genomic_RNA"/>
</dbReference>
<dbReference type="EMBL" id="AY142960">
    <property type="protein sequence ID" value="AAN37511.1"/>
    <property type="molecule type" value="Genomic_RNA"/>
</dbReference>
<dbReference type="EMBL" id="AF499101">
    <property type="protein sequence ID" value="AAM76038.1"/>
    <property type="molecule type" value="Genomic_RNA"/>
</dbReference>
<dbReference type="RefSeq" id="NP_066251.1">
    <property type="nucleotide sequence ID" value="NC_002549.1"/>
</dbReference>
<dbReference type="SMR" id="Q05318"/>
<dbReference type="IntAct" id="Q05318">
    <property type="interactions" value="1"/>
</dbReference>
<dbReference type="ChEMBL" id="CHEMBL4303062"/>
<dbReference type="DrugBank" id="DB11676">
    <property type="generic name" value="Galidesivir"/>
</dbReference>
<dbReference type="DrugBank" id="DB15686">
    <property type="generic name" value="GS-441524"/>
</dbReference>
<dbReference type="DrugBank" id="DB14761">
    <property type="generic name" value="Remdesivir"/>
</dbReference>
<dbReference type="GeneID" id="911824"/>
<dbReference type="KEGG" id="vg:911824"/>
<dbReference type="Proteomes" id="UP000007209">
    <property type="component" value="Genome"/>
</dbReference>
<dbReference type="Proteomes" id="UP000109874">
    <property type="component" value="Genome"/>
</dbReference>
<dbReference type="Proteomes" id="UP000149419">
    <property type="component" value="Genome"/>
</dbReference>
<dbReference type="Proteomes" id="UP000150973">
    <property type="component" value="Genome"/>
</dbReference>
<dbReference type="Proteomes" id="UP000180447">
    <property type="component" value="Genome"/>
</dbReference>
<dbReference type="GO" id="GO:0030430">
    <property type="term" value="C:host cell cytoplasm"/>
    <property type="evidence" value="ECO:0007669"/>
    <property type="project" value="UniProtKB-SubCell"/>
</dbReference>
<dbReference type="GO" id="GO:0044423">
    <property type="term" value="C:virion component"/>
    <property type="evidence" value="ECO:0007669"/>
    <property type="project" value="UniProtKB-KW"/>
</dbReference>
<dbReference type="GO" id="GO:0005524">
    <property type="term" value="F:ATP binding"/>
    <property type="evidence" value="ECO:0007669"/>
    <property type="project" value="UniProtKB-KW"/>
</dbReference>
<dbReference type="GO" id="GO:0003924">
    <property type="term" value="F:GTPase activity"/>
    <property type="evidence" value="ECO:0007669"/>
    <property type="project" value="RHEA"/>
</dbReference>
<dbReference type="GO" id="GO:0004482">
    <property type="term" value="F:mRNA 5'-cap (guanine-N7-)-methyltransferase activity"/>
    <property type="evidence" value="ECO:0007669"/>
    <property type="project" value="InterPro"/>
</dbReference>
<dbReference type="GO" id="GO:0097747">
    <property type="term" value="F:RNA polymerase activity"/>
    <property type="evidence" value="ECO:0000270"/>
    <property type="project" value="DisProt"/>
</dbReference>
<dbReference type="GO" id="GO:0003968">
    <property type="term" value="F:RNA-directed RNA polymerase activity"/>
    <property type="evidence" value="ECO:0007669"/>
    <property type="project" value="UniProtKB-KW"/>
</dbReference>
<dbReference type="GO" id="GO:0039689">
    <property type="term" value="P:negative stranded viral RNA replication"/>
    <property type="evidence" value="ECO:0000314"/>
    <property type="project" value="UniProtKB"/>
</dbReference>
<dbReference type="GO" id="GO:0039697">
    <property type="term" value="P:negative stranded viral RNA transcription"/>
    <property type="evidence" value="ECO:0000314"/>
    <property type="project" value="UniProtKB"/>
</dbReference>
<dbReference type="Gene3D" id="3.40.50.150">
    <property type="entry name" value="Vaccinia Virus protein VP39"/>
    <property type="match status" value="1"/>
</dbReference>
<dbReference type="InterPro" id="IPR039736">
    <property type="entry name" value="L_poly_C"/>
</dbReference>
<dbReference type="InterPro" id="IPR026890">
    <property type="entry name" value="Mononeg_mRNAcap"/>
</dbReference>
<dbReference type="InterPro" id="IPR014023">
    <property type="entry name" value="Mononeg_RNA_pol_cat"/>
</dbReference>
<dbReference type="InterPro" id="IPR025786">
    <property type="entry name" value="Mononega_L_MeTrfase"/>
</dbReference>
<dbReference type="InterPro" id="IPR017235">
    <property type="entry name" value="RNA-dir_pol_L_filovirus"/>
</dbReference>
<dbReference type="InterPro" id="IPR029063">
    <property type="entry name" value="SAM-dependent_MTases_sf"/>
</dbReference>
<dbReference type="NCBIfam" id="TIGR04198">
    <property type="entry name" value="paramyx_RNAcap"/>
    <property type="match status" value="2"/>
</dbReference>
<dbReference type="Pfam" id="PF14318">
    <property type="entry name" value="Mononeg_mRNAcap"/>
    <property type="match status" value="1"/>
</dbReference>
<dbReference type="Pfam" id="PF00946">
    <property type="entry name" value="Mononeg_RNA_pol"/>
    <property type="match status" value="1"/>
</dbReference>
<dbReference type="PIRSF" id="PIRSF037548">
    <property type="entry name" value="RNA_pol_Filoviridae"/>
    <property type="match status" value="1"/>
</dbReference>
<dbReference type="PROSITE" id="PS50526">
    <property type="entry name" value="RDRP_SSRNA_NEG_NONSEG"/>
    <property type="match status" value="1"/>
</dbReference>
<dbReference type="PROSITE" id="PS51590">
    <property type="entry name" value="SAM_MT_MNV_L"/>
    <property type="match status" value="1"/>
</dbReference>
<reference key="1">
    <citation type="journal article" date="1999" name="J. Gen. Virol.">
        <title>Characterization of the L gene and 5' trailer region of Ebola virus.</title>
        <authorList>
            <person name="Volchkov V.E."/>
            <person name="Volchkova V.A."/>
            <person name="Chepurnov A.A."/>
            <person name="Blinov V.M."/>
            <person name="Netesov S.V."/>
            <person name="Feldmann H."/>
        </authorList>
    </citation>
    <scope>NUCLEOTIDE SEQUENCE [GENOMIC RNA]</scope>
</reference>
<reference key="2">
    <citation type="journal article" date="1993" name="Virus Res.">
        <title>Sequence analysis of the Ebola virus genome: organization, genetic elements, and comparison with the genome of Marburg virus.</title>
        <authorList>
            <person name="Sanchez A."/>
            <person name="Kiley M.P."/>
            <person name="Holloway B.P."/>
            <person name="Auperin D.D."/>
        </authorList>
    </citation>
    <scope>NUCLEOTIDE SEQUENCE [GENOMIC RNA] OF 1-54</scope>
</reference>
<reference key="3">
    <citation type="submission" date="2002-08" db="EMBL/GenBank/DDBJ databases">
        <authorList>
            <person name="Wilson J.A."/>
            <person name="Kondig J.P."/>
            <person name="Kuehne A.I."/>
            <person name="Hart M.K."/>
        </authorList>
    </citation>
    <scope>NUCLEOTIDE SEQUENCE [GENOMIC RNA]</scope>
</reference>
<reference key="4">
    <citation type="journal article" date="2013" name="Virology">
        <title>The L-VP35 and L-L interaction domains reside in the amino terminus of the Ebola virus L protein and are potential targets for antivirals.</title>
        <authorList>
            <person name="Trunschke M."/>
            <person name="Conrad D."/>
            <person name="Enterlein S."/>
            <person name="Olejnik J."/>
            <person name="Brauburger K."/>
            <person name="Muehlberger E."/>
        </authorList>
    </citation>
    <scope>FUNCTION</scope>
    <scope>SUBCELLULAR LOCATION</scope>
    <scope>INTERACTION WITH VP35</scope>
    <scope>REGION</scope>
</reference>
<reference key="5">
    <citation type="journal article" date="2017" name="PLoS Negl. Trop. Dis.">
        <title>Characterization of the catalytic center of the Ebola virus L polymerase.</title>
        <authorList>
            <person name="Schmidt M.L."/>
            <person name="Hoenen T."/>
        </authorList>
    </citation>
    <scope>FUNCTION</scope>
    <scope>SUBCELLULAR LOCATION</scope>
    <scope>MUTAGENESIS OF 742-ASP--GLN-744</scope>
</reference>
<reference key="6">
    <citation type="journal article" date="2018" name="Sci. Rep.">
        <title>Recombinant RNA-Dependent RNA Polymerase Complex of Ebola Virus.</title>
        <authorList>
            <person name="Tchesnokov E.P."/>
            <person name="Raeisimakiani P."/>
            <person name="Ngure M."/>
            <person name="Marchant D."/>
            <person name="Goette M."/>
        </authorList>
    </citation>
    <scope>FUNCTION</scope>
    <scope>MUTAGENESIS OF ASP-742</scope>
    <scope>COFACTOR</scope>
</reference>
<name>L_EBOZM</name>
<comment type="function">
    <text evidence="1 6 7 8">RNA-directed RNA polymerase that catalyzes the transcription of viral mRNAs, their capping and polyadenylation. The template is composed of the viral RNA tightly encapsidated by the nucleoprotein (N). The viral polymerase binds to the genomic RNA at the 3' leader promoter, and transcribes subsequently all viral mRNAs with a decreasing efficiency. The first gene is the most transcribed, and the last the least transcribed. The viral phosphoprotein acts as a processivity factor. Capping is concomitant with initiation of mRNA transcription. Indeed, a GDP polyribonucleotidyl transferase (PRNTase) adds the cap structure when the nascent RNA chain length has reached few nucleotides. Ribose 2'-O methylation of viral mRNA cap precedes and facilitates subsequent guanine-N-7 methylation, both activities being carried by the viral polymerase. Polyadenylation of mRNAs occur by a stuttering mechanism at a slipery stop site present at the end viral genes. After finishing transcription of a mRNA, the polymerase can resume transcription of the downstream gene.</text>
</comment>
<comment type="function">
    <text evidence="1 6 7 8">RNA-directed RNA polymerase that catalyzes the replication of viral genomic RNA. The template is composed of the viral RNA tightly encapsidated by the nucleoprotein (N). The replicase mode is dependent on intracellular N protein concentration. In this mode, the polymerase replicates the whole viral genome without recognizing transcriptional signals, and the replicated genome is not caped or polyadenylated.</text>
</comment>
<comment type="catalytic activity">
    <reaction evidence="3">
        <text>RNA(n) + a ribonucleoside 5'-triphosphate = RNA(n+1) + diphosphate</text>
        <dbReference type="Rhea" id="RHEA:21248"/>
        <dbReference type="Rhea" id="RHEA-COMP:14527"/>
        <dbReference type="Rhea" id="RHEA-COMP:17342"/>
        <dbReference type="ChEBI" id="CHEBI:33019"/>
        <dbReference type="ChEBI" id="CHEBI:61557"/>
        <dbReference type="ChEBI" id="CHEBI:140395"/>
        <dbReference type="EC" id="2.7.7.48"/>
    </reaction>
</comment>
<comment type="catalytic activity">
    <reaction evidence="1">
        <text>a 5'-end (5'-triphosphoguanosine)-adenylyl-adenylyl-cytidylyl-adenosine in mRNA + 2 S-adenosyl-L-methionine = a 5'-end (N(7)-methyl 5'-triphosphoguanosine)-(2'-O-methyladenylyl)-adenylyl-cytidylyl-adenosine in mRNA + 2 S-adenosyl-L-homocysteine + H(+)</text>
        <dbReference type="Rhea" id="RHEA:65376"/>
        <dbReference type="Rhea" id="RHEA-COMP:16797"/>
        <dbReference type="Rhea" id="RHEA-COMP:16798"/>
        <dbReference type="ChEBI" id="CHEBI:15378"/>
        <dbReference type="ChEBI" id="CHEBI:57856"/>
        <dbReference type="ChEBI" id="CHEBI:59789"/>
        <dbReference type="ChEBI" id="CHEBI:156483"/>
        <dbReference type="ChEBI" id="CHEBI:156484"/>
        <dbReference type="EC" id="2.1.1.375"/>
    </reaction>
</comment>
<comment type="catalytic activity">
    <reaction evidence="1">
        <text>a 5'-end (5'-triphosphoguanosine)-adenylyl-adenylyl-cytidylyl-adenosine in mRNA + S-adenosyl-L-methionine = a 5'-end (5'-triphosphoguanosine)-(2'-O-methyladenylyl)-adenylyl-cytidylyl-adenosine in mRNA + S-adenosyl-L-homocysteine + H(+)</text>
        <dbReference type="Rhea" id="RHEA:65380"/>
        <dbReference type="Rhea" id="RHEA-COMP:16797"/>
        <dbReference type="Rhea" id="RHEA-COMP:16801"/>
        <dbReference type="ChEBI" id="CHEBI:15378"/>
        <dbReference type="ChEBI" id="CHEBI:57856"/>
        <dbReference type="ChEBI" id="CHEBI:59789"/>
        <dbReference type="ChEBI" id="CHEBI:156482"/>
        <dbReference type="ChEBI" id="CHEBI:156484"/>
    </reaction>
</comment>
<comment type="catalytic activity">
    <reaction evidence="2">
        <text>a 5'-end triphospho-adenylyl-adenylyl-cytidylyl-adenosine in mRNA + GDP + H(+) = a 5'-end (5'-triphosphoguanosine)-adenylyl-adenylyl-cytidylyl-adenosine in mRNA + diphosphate</text>
        <dbReference type="Rhea" id="RHEA:65436"/>
        <dbReference type="Rhea" id="RHEA-COMP:16797"/>
        <dbReference type="Rhea" id="RHEA-COMP:16799"/>
        <dbReference type="ChEBI" id="CHEBI:15378"/>
        <dbReference type="ChEBI" id="CHEBI:33019"/>
        <dbReference type="ChEBI" id="CHEBI:58189"/>
        <dbReference type="ChEBI" id="CHEBI:156484"/>
        <dbReference type="ChEBI" id="CHEBI:156503"/>
        <dbReference type="EC" id="2.7.7.88"/>
    </reaction>
</comment>
<comment type="catalytic activity">
    <reaction evidence="1">
        <text>a 5'-end (5'-triphosphoguanosine)-(2'-O-methyladenylyl)-adenylyl-cytidylyl-adenosine in mRNA + S-adenosyl-L-methionine = a 5'-end (N(7)-methyl 5'-triphosphoguanosine)-(2'-O-methyladenylyl)-adenylyl-cytidylyl-adenosine in mRNA + S-adenosyl-L-homocysteine</text>
        <dbReference type="Rhea" id="RHEA:65440"/>
        <dbReference type="Rhea" id="RHEA-COMP:16798"/>
        <dbReference type="Rhea" id="RHEA-COMP:16801"/>
        <dbReference type="ChEBI" id="CHEBI:57856"/>
        <dbReference type="ChEBI" id="CHEBI:59789"/>
        <dbReference type="ChEBI" id="CHEBI:156482"/>
        <dbReference type="ChEBI" id="CHEBI:156483"/>
    </reaction>
</comment>
<comment type="catalytic activity">
    <reaction evidence="2">
        <text>GTP + H2O = GDP + phosphate + H(+)</text>
        <dbReference type="Rhea" id="RHEA:19669"/>
        <dbReference type="ChEBI" id="CHEBI:15377"/>
        <dbReference type="ChEBI" id="CHEBI:15378"/>
        <dbReference type="ChEBI" id="CHEBI:37565"/>
        <dbReference type="ChEBI" id="CHEBI:43474"/>
        <dbReference type="ChEBI" id="CHEBI:58189"/>
    </reaction>
</comment>
<comment type="cofactor">
    <cofactor evidence="8">
        <name>Mg(2+)</name>
        <dbReference type="ChEBI" id="CHEBI:18420"/>
    </cofactor>
</comment>
<comment type="subunit">
    <text evidence="6">Forms homooligomers. Interacts with VP35; this complex constitutes a functional polymerase complex.</text>
</comment>
<comment type="subcellular location">
    <subcellularLocation>
        <location>Virion</location>
    </subcellularLocation>
    <subcellularLocation>
        <location evidence="6 7">Host cytoplasm</location>
    </subcellularLocation>
    <text evidence="6 7">Found in cytoplasmic inclusion bodies present in infected cells.</text>
</comment>